<protein>
    <recommendedName>
        <fullName evidence="1">Thiamine-phosphate synthase</fullName>
        <shortName evidence="1">TP synthase</shortName>
        <shortName evidence="1">TPS</shortName>
        <ecNumber evidence="1">2.5.1.3</ecNumber>
    </recommendedName>
    <alternativeName>
        <fullName evidence="1">Thiamine-phosphate pyrophosphorylase</fullName>
        <shortName evidence="1">TMP pyrophosphorylase</shortName>
        <shortName evidence="1">TMP-PPase</shortName>
    </alternativeName>
</protein>
<evidence type="ECO:0000255" key="1">
    <source>
        <dbReference type="HAMAP-Rule" id="MF_00097"/>
    </source>
</evidence>
<proteinExistence type="inferred from homology"/>
<keyword id="KW-0460">Magnesium</keyword>
<keyword id="KW-0479">Metal-binding</keyword>
<keyword id="KW-0784">Thiamine biosynthesis</keyword>
<keyword id="KW-0808">Transferase</keyword>
<accession>O58878</accession>
<feature type="chain" id="PRO_0000157075" description="Thiamine-phosphate synthase">
    <location>
        <begin position="1"/>
        <end position="207"/>
    </location>
</feature>
<feature type="binding site" evidence="1">
    <location>
        <begin position="36"/>
        <end position="40"/>
    </location>
    <ligand>
        <name>4-amino-2-methyl-5-(diphosphooxymethyl)pyrimidine</name>
        <dbReference type="ChEBI" id="CHEBI:57841"/>
    </ligand>
</feature>
<feature type="binding site" evidence="1">
    <location>
        <position position="68"/>
    </location>
    <ligand>
        <name>4-amino-2-methyl-5-(diphosphooxymethyl)pyrimidine</name>
        <dbReference type="ChEBI" id="CHEBI:57841"/>
    </ligand>
</feature>
<feature type="binding site" evidence="1">
    <location>
        <position position="69"/>
    </location>
    <ligand>
        <name>Mg(2+)</name>
        <dbReference type="ChEBI" id="CHEBI:18420"/>
    </ligand>
</feature>
<feature type="binding site" evidence="1">
    <location>
        <position position="88"/>
    </location>
    <ligand>
        <name>Mg(2+)</name>
        <dbReference type="ChEBI" id="CHEBI:18420"/>
    </ligand>
</feature>
<feature type="binding site" evidence="1">
    <location>
        <position position="106"/>
    </location>
    <ligand>
        <name>4-amino-2-methyl-5-(diphosphooxymethyl)pyrimidine</name>
        <dbReference type="ChEBI" id="CHEBI:57841"/>
    </ligand>
</feature>
<feature type="binding site" evidence="1">
    <location>
        <begin position="132"/>
        <end position="134"/>
    </location>
    <ligand>
        <name>2-[(2R,5Z)-2-carboxy-4-methylthiazol-5(2H)-ylidene]ethyl phosphate</name>
        <dbReference type="ChEBI" id="CHEBI:62899"/>
    </ligand>
</feature>
<feature type="binding site" evidence="1">
    <location>
        <position position="135"/>
    </location>
    <ligand>
        <name>4-amino-2-methyl-5-(diphosphooxymethyl)pyrimidine</name>
        <dbReference type="ChEBI" id="CHEBI:57841"/>
    </ligand>
</feature>
<feature type="binding site" evidence="1">
    <location>
        <position position="162"/>
    </location>
    <ligand>
        <name>2-[(2R,5Z)-2-carboxy-4-methylthiazol-5(2H)-ylidene]ethyl phosphate</name>
        <dbReference type="ChEBI" id="CHEBI:62899"/>
    </ligand>
</feature>
<feature type="binding site" evidence="1">
    <location>
        <begin position="182"/>
        <end position="183"/>
    </location>
    <ligand>
        <name>2-[(2R,5Z)-2-carboxy-4-methylthiazol-5(2H)-ylidene]ethyl phosphate</name>
        <dbReference type="ChEBI" id="CHEBI:62899"/>
    </ligand>
</feature>
<gene>
    <name evidence="1" type="primary">thiE</name>
    <name type="ordered locus">PH1156</name>
</gene>
<dbReference type="EC" id="2.5.1.3" evidence="1"/>
<dbReference type="EMBL" id="BA000001">
    <property type="protein sequence ID" value="BAA30256.1"/>
    <property type="molecule type" value="Genomic_DNA"/>
</dbReference>
<dbReference type="PIR" id="F71057">
    <property type="entry name" value="F71057"/>
</dbReference>
<dbReference type="RefSeq" id="WP_010885241.1">
    <property type="nucleotide sequence ID" value="NC_000961.1"/>
</dbReference>
<dbReference type="SMR" id="O58878"/>
<dbReference type="STRING" id="70601.gene:9378117"/>
<dbReference type="EnsemblBacteria" id="BAA30256">
    <property type="protein sequence ID" value="BAA30256"/>
    <property type="gene ID" value="BAA30256"/>
</dbReference>
<dbReference type="GeneID" id="1443476"/>
<dbReference type="KEGG" id="pho:PH1156"/>
<dbReference type="eggNOG" id="arCOG01089">
    <property type="taxonomic scope" value="Archaea"/>
</dbReference>
<dbReference type="OrthoDB" id="85572at2157"/>
<dbReference type="UniPathway" id="UPA00060">
    <property type="reaction ID" value="UER00141"/>
</dbReference>
<dbReference type="Proteomes" id="UP000000752">
    <property type="component" value="Chromosome"/>
</dbReference>
<dbReference type="GO" id="GO:0005737">
    <property type="term" value="C:cytoplasm"/>
    <property type="evidence" value="ECO:0007669"/>
    <property type="project" value="TreeGrafter"/>
</dbReference>
<dbReference type="GO" id="GO:0000287">
    <property type="term" value="F:magnesium ion binding"/>
    <property type="evidence" value="ECO:0007669"/>
    <property type="project" value="UniProtKB-UniRule"/>
</dbReference>
<dbReference type="GO" id="GO:0004789">
    <property type="term" value="F:thiamine-phosphate diphosphorylase activity"/>
    <property type="evidence" value="ECO:0007669"/>
    <property type="project" value="UniProtKB-UniRule"/>
</dbReference>
<dbReference type="GO" id="GO:0009228">
    <property type="term" value="P:thiamine biosynthetic process"/>
    <property type="evidence" value="ECO:0007669"/>
    <property type="project" value="UniProtKB-KW"/>
</dbReference>
<dbReference type="GO" id="GO:0009229">
    <property type="term" value="P:thiamine diphosphate biosynthetic process"/>
    <property type="evidence" value="ECO:0007669"/>
    <property type="project" value="UniProtKB-UniRule"/>
</dbReference>
<dbReference type="CDD" id="cd00564">
    <property type="entry name" value="TMP_TenI"/>
    <property type="match status" value="1"/>
</dbReference>
<dbReference type="FunFam" id="3.20.20.70:FF:000096">
    <property type="entry name" value="Thiamine-phosphate synthase"/>
    <property type="match status" value="1"/>
</dbReference>
<dbReference type="Gene3D" id="3.20.20.70">
    <property type="entry name" value="Aldolase class I"/>
    <property type="match status" value="1"/>
</dbReference>
<dbReference type="HAMAP" id="MF_00097">
    <property type="entry name" value="TMP_synthase"/>
    <property type="match status" value="1"/>
</dbReference>
<dbReference type="InterPro" id="IPR013785">
    <property type="entry name" value="Aldolase_TIM"/>
</dbReference>
<dbReference type="InterPro" id="IPR036206">
    <property type="entry name" value="ThiamineP_synth_sf"/>
</dbReference>
<dbReference type="InterPro" id="IPR022998">
    <property type="entry name" value="ThiamineP_synth_TenI"/>
</dbReference>
<dbReference type="InterPro" id="IPR034291">
    <property type="entry name" value="TMP_synthase"/>
</dbReference>
<dbReference type="NCBIfam" id="TIGR00693">
    <property type="entry name" value="thiE"/>
    <property type="match status" value="1"/>
</dbReference>
<dbReference type="PANTHER" id="PTHR20857:SF23">
    <property type="entry name" value="THIAMINE BIOSYNTHETIC BIFUNCTIONAL ENZYME"/>
    <property type="match status" value="1"/>
</dbReference>
<dbReference type="PANTHER" id="PTHR20857">
    <property type="entry name" value="THIAMINE-PHOSPHATE PYROPHOSPHORYLASE"/>
    <property type="match status" value="1"/>
</dbReference>
<dbReference type="Pfam" id="PF02581">
    <property type="entry name" value="TMP-TENI"/>
    <property type="match status" value="1"/>
</dbReference>
<dbReference type="SUPFAM" id="SSF51391">
    <property type="entry name" value="Thiamin phosphate synthase"/>
    <property type="match status" value="1"/>
</dbReference>
<name>THIE_PYRHO</name>
<organism>
    <name type="scientific">Pyrococcus horikoshii (strain ATCC 700860 / DSM 12428 / JCM 9974 / NBRC 100139 / OT-3)</name>
    <dbReference type="NCBI Taxonomy" id="70601"/>
    <lineage>
        <taxon>Archaea</taxon>
        <taxon>Methanobacteriati</taxon>
        <taxon>Methanobacteriota</taxon>
        <taxon>Thermococci</taxon>
        <taxon>Thermococcales</taxon>
        <taxon>Thermococcaceae</taxon>
        <taxon>Pyrococcus</taxon>
    </lineage>
</organism>
<comment type="function">
    <text evidence="1">Condenses 4-methyl-5-(beta-hydroxyethyl)thiazole monophosphate (THZ-P) and 2-methyl-4-amino-5-hydroxymethyl pyrimidine pyrophosphate (HMP-PP) to form thiamine monophosphate (TMP).</text>
</comment>
<comment type="catalytic activity">
    <reaction evidence="1">
        <text>2-[(2R,5Z)-2-carboxy-4-methylthiazol-5(2H)-ylidene]ethyl phosphate + 4-amino-2-methyl-5-(diphosphooxymethyl)pyrimidine + 2 H(+) = thiamine phosphate + CO2 + diphosphate</text>
        <dbReference type="Rhea" id="RHEA:47844"/>
        <dbReference type="ChEBI" id="CHEBI:15378"/>
        <dbReference type="ChEBI" id="CHEBI:16526"/>
        <dbReference type="ChEBI" id="CHEBI:33019"/>
        <dbReference type="ChEBI" id="CHEBI:37575"/>
        <dbReference type="ChEBI" id="CHEBI:57841"/>
        <dbReference type="ChEBI" id="CHEBI:62899"/>
        <dbReference type="EC" id="2.5.1.3"/>
    </reaction>
</comment>
<comment type="catalytic activity">
    <reaction evidence="1">
        <text>2-(2-carboxy-4-methylthiazol-5-yl)ethyl phosphate + 4-amino-2-methyl-5-(diphosphooxymethyl)pyrimidine + 2 H(+) = thiamine phosphate + CO2 + diphosphate</text>
        <dbReference type="Rhea" id="RHEA:47848"/>
        <dbReference type="ChEBI" id="CHEBI:15378"/>
        <dbReference type="ChEBI" id="CHEBI:16526"/>
        <dbReference type="ChEBI" id="CHEBI:33019"/>
        <dbReference type="ChEBI" id="CHEBI:37575"/>
        <dbReference type="ChEBI" id="CHEBI:57841"/>
        <dbReference type="ChEBI" id="CHEBI:62890"/>
        <dbReference type="EC" id="2.5.1.3"/>
    </reaction>
</comment>
<comment type="catalytic activity">
    <reaction evidence="1">
        <text>4-methyl-5-(2-phosphooxyethyl)-thiazole + 4-amino-2-methyl-5-(diphosphooxymethyl)pyrimidine + H(+) = thiamine phosphate + diphosphate</text>
        <dbReference type="Rhea" id="RHEA:22328"/>
        <dbReference type="ChEBI" id="CHEBI:15378"/>
        <dbReference type="ChEBI" id="CHEBI:33019"/>
        <dbReference type="ChEBI" id="CHEBI:37575"/>
        <dbReference type="ChEBI" id="CHEBI:57841"/>
        <dbReference type="ChEBI" id="CHEBI:58296"/>
        <dbReference type="EC" id="2.5.1.3"/>
    </reaction>
</comment>
<comment type="cofactor">
    <cofactor evidence="1">
        <name>Mg(2+)</name>
        <dbReference type="ChEBI" id="CHEBI:18420"/>
    </cofactor>
    <text evidence="1">Binds 1 Mg(2+) ion per subunit.</text>
</comment>
<comment type="pathway">
    <text evidence="1">Cofactor biosynthesis; thiamine diphosphate biosynthesis; thiamine phosphate from 4-amino-2-methyl-5-diphosphomethylpyrimidine and 4-methyl-5-(2-phosphoethyl)-thiazole: step 1/1.</text>
</comment>
<comment type="similarity">
    <text evidence="1">Belongs to the thiamine-phosphate synthase family.</text>
</comment>
<sequence>MNFKEKLKLYIITDRRLKPEIASVKQALEGGATSIQLRIKNAPTREMYEIGKEIRKLTNEYGALFFVDDRIDVALAVNADGVQLGPDDMPIEIAREIAPNLIIGASVYSLEEALEAEMKGADYLGAGSVFPTQTKKDVKVIGIEGLREIVNAVKIPVVAIGGINLENVREVLLTGVDGIAVVSAVMGTEDVKRATEGLRRIIEEVLG</sequence>
<reference key="1">
    <citation type="journal article" date="1998" name="DNA Res.">
        <title>Complete sequence and gene organization of the genome of a hyper-thermophilic archaebacterium, Pyrococcus horikoshii OT3.</title>
        <authorList>
            <person name="Kawarabayasi Y."/>
            <person name="Sawada M."/>
            <person name="Horikawa H."/>
            <person name="Haikawa Y."/>
            <person name="Hino Y."/>
            <person name="Yamamoto S."/>
            <person name="Sekine M."/>
            <person name="Baba S."/>
            <person name="Kosugi H."/>
            <person name="Hosoyama A."/>
            <person name="Nagai Y."/>
            <person name="Sakai M."/>
            <person name="Ogura K."/>
            <person name="Otsuka R."/>
            <person name="Nakazawa H."/>
            <person name="Takamiya M."/>
            <person name="Ohfuku Y."/>
            <person name="Funahashi T."/>
            <person name="Tanaka T."/>
            <person name="Kudoh Y."/>
            <person name="Yamazaki J."/>
            <person name="Kushida N."/>
            <person name="Oguchi A."/>
            <person name="Aoki K."/>
            <person name="Yoshizawa T."/>
            <person name="Nakamura Y."/>
            <person name="Robb F.T."/>
            <person name="Horikoshi K."/>
            <person name="Masuchi Y."/>
            <person name="Shizuya H."/>
            <person name="Kikuchi H."/>
        </authorList>
    </citation>
    <scope>NUCLEOTIDE SEQUENCE [LARGE SCALE GENOMIC DNA]</scope>
    <source>
        <strain>ATCC 700860 / DSM 12428 / JCM 9974 / NBRC 100139 / OT-3</strain>
    </source>
</reference>